<accession>P40562</accession>
<accession>D6VVT2</accession>
<dbReference type="EC" id="3.6.4.12" evidence="8"/>
<dbReference type="EMBL" id="X79743">
    <property type="status" value="NOT_ANNOTATED_CDS"/>
    <property type="molecule type" value="Genomic_DNA"/>
</dbReference>
<dbReference type="EMBL" id="Z38062">
    <property type="protein sequence ID" value="CAA86204.1"/>
    <property type="molecule type" value="Genomic_DNA"/>
</dbReference>
<dbReference type="EMBL" id="BK006942">
    <property type="protein sequence ID" value="DAA08548.1"/>
    <property type="molecule type" value="Genomic_DNA"/>
</dbReference>
<dbReference type="PIR" id="S48436">
    <property type="entry name" value="S48436"/>
</dbReference>
<dbReference type="RefSeq" id="NP_012267.1">
    <property type="nucleotide sequence ID" value="NM_001179524.1"/>
</dbReference>
<dbReference type="SMR" id="P40562"/>
<dbReference type="BioGRID" id="34993">
    <property type="interactions" value="339"/>
</dbReference>
<dbReference type="DIP" id="DIP-5016N"/>
<dbReference type="FunCoup" id="P40562">
    <property type="interactions" value="304"/>
</dbReference>
<dbReference type="IntAct" id="P40562">
    <property type="interactions" value="11"/>
</dbReference>
<dbReference type="STRING" id="4932.YIR002C"/>
<dbReference type="GlyGen" id="P40562">
    <property type="glycosylation" value="1 site"/>
</dbReference>
<dbReference type="iPTMnet" id="P40562"/>
<dbReference type="PaxDb" id="4932-YIR002C"/>
<dbReference type="PeptideAtlas" id="P40562"/>
<dbReference type="EnsemblFungi" id="YIR002C_mRNA">
    <property type="protein sequence ID" value="YIR002C"/>
    <property type="gene ID" value="YIR002C"/>
</dbReference>
<dbReference type="GeneID" id="854818"/>
<dbReference type="KEGG" id="sce:YIR002C"/>
<dbReference type="AGR" id="SGD:S000001441"/>
<dbReference type="SGD" id="S000001441">
    <property type="gene designation" value="MPH1"/>
</dbReference>
<dbReference type="VEuPathDB" id="FungiDB:YIR002C"/>
<dbReference type="eggNOG" id="KOG0354">
    <property type="taxonomic scope" value="Eukaryota"/>
</dbReference>
<dbReference type="GeneTree" id="ENSGT00940000156480"/>
<dbReference type="HOGENOM" id="CLU_002513_1_0_1"/>
<dbReference type="InParanoid" id="P40562"/>
<dbReference type="OMA" id="EGIKWRN"/>
<dbReference type="OrthoDB" id="164902at2759"/>
<dbReference type="BioCyc" id="YEAST:G3O-31423-MONOMER"/>
<dbReference type="BRENDA" id="3.6.4.12">
    <property type="organism ID" value="984"/>
</dbReference>
<dbReference type="BioGRID-ORCS" id="854818">
    <property type="hits" value="4 hits in 10 CRISPR screens"/>
</dbReference>
<dbReference type="PRO" id="PR:P40562"/>
<dbReference type="Proteomes" id="UP000002311">
    <property type="component" value="Chromosome IX"/>
</dbReference>
<dbReference type="RNAct" id="P40562">
    <property type="molecule type" value="protein"/>
</dbReference>
<dbReference type="GO" id="GO:0005634">
    <property type="term" value="C:nucleus"/>
    <property type="evidence" value="ECO:0000314"/>
    <property type="project" value="SGD"/>
</dbReference>
<dbReference type="GO" id="GO:0043138">
    <property type="term" value="F:3'-5' DNA helicase activity"/>
    <property type="evidence" value="ECO:0000314"/>
    <property type="project" value="SGD"/>
</dbReference>
<dbReference type="GO" id="GO:0005524">
    <property type="term" value="F:ATP binding"/>
    <property type="evidence" value="ECO:0007669"/>
    <property type="project" value="UniProtKB-KW"/>
</dbReference>
<dbReference type="GO" id="GO:0016887">
    <property type="term" value="F:ATP hydrolysis activity"/>
    <property type="evidence" value="ECO:0007669"/>
    <property type="project" value="RHEA"/>
</dbReference>
<dbReference type="GO" id="GO:0033677">
    <property type="term" value="F:DNA/RNA helicase activity"/>
    <property type="evidence" value="ECO:0000314"/>
    <property type="project" value="SGD"/>
</dbReference>
<dbReference type="GO" id="GO:0070336">
    <property type="term" value="F:flap-structured DNA binding"/>
    <property type="evidence" value="ECO:0000314"/>
    <property type="project" value="SGD"/>
</dbReference>
<dbReference type="GO" id="GO:0000400">
    <property type="term" value="F:four-way junction DNA binding"/>
    <property type="evidence" value="ECO:0000318"/>
    <property type="project" value="GO_Central"/>
</dbReference>
<dbReference type="GO" id="GO:0009378">
    <property type="term" value="F:four-way junction helicase activity"/>
    <property type="evidence" value="ECO:0000318"/>
    <property type="project" value="GO_Central"/>
</dbReference>
<dbReference type="GO" id="GO:0033567">
    <property type="term" value="P:DNA replication, Okazaki fragment processing"/>
    <property type="evidence" value="ECO:0000316"/>
    <property type="project" value="SGD"/>
</dbReference>
<dbReference type="GO" id="GO:0007535">
    <property type="term" value="P:donor selection"/>
    <property type="evidence" value="ECO:0000315"/>
    <property type="project" value="SGD"/>
</dbReference>
<dbReference type="GO" id="GO:0045003">
    <property type="term" value="P:double-strand break repair via synthesis-dependent strand annealing"/>
    <property type="evidence" value="ECO:0000318"/>
    <property type="project" value="GO_Central"/>
</dbReference>
<dbReference type="GO" id="GO:0036297">
    <property type="term" value="P:interstrand cross-link repair"/>
    <property type="evidence" value="ECO:0000316"/>
    <property type="project" value="SGD"/>
</dbReference>
<dbReference type="GO" id="GO:0060543">
    <property type="term" value="P:negative regulation of strand invasion"/>
    <property type="evidence" value="ECO:0000314"/>
    <property type="project" value="SGD"/>
</dbReference>
<dbReference type="GO" id="GO:0000725">
    <property type="term" value="P:recombinational repair"/>
    <property type="evidence" value="ECO:0000315"/>
    <property type="project" value="SGD"/>
</dbReference>
<dbReference type="CDD" id="cd18033">
    <property type="entry name" value="DEXDc_FANCM"/>
    <property type="match status" value="1"/>
</dbReference>
<dbReference type="CDD" id="cd12091">
    <property type="entry name" value="FANCM_ID"/>
    <property type="match status" value="1"/>
</dbReference>
<dbReference type="CDD" id="cd18801">
    <property type="entry name" value="SF2_C_FANCM_Hef"/>
    <property type="match status" value="1"/>
</dbReference>
<dbReference type="FunFam" id="3.40.50.300:FF:000861">
    <property type="entry name" value="Fanconi anemia, complementation group M"/>
    <property type="match status" value="1"/>
</dbReference>
<dbReference type="Gene3D" id="3.40.50.300">
    <property type="entry name" value="P-loop containing nucleotide triphosphate hydrolases"/>
    <property type="match status" value="2"/>
</dbReference>
<dbReference type="InterPro" id="IPR039686">
    <property type="entry name" value="FANCM/Mph1-like_ID"/>
</dbReference>
<dbReference type="InterPro" id="IPR044749">
    <property type="entry name" value="FANCM_DEXDc"/>
</dbReference>
<dbReference type="InterPro" id="IPR006935">
    <property type="entry name" value="Helicase/UvrB_N"/>
</dbReference>
<dbReference type="InterPro" id="IPR014001">
    <property type="entry name" value="Helicase_ATP-bd"/>
</dbReference>
<dbReference type="InterPro" id="IPR001650">
    <property type="entry name" value="Helicase_C-like"/>
</dbReference>
<dbReference type="InterPro" id="IPR027417">
    <property type="entry name" value="P-loop_NTPase"/>
</dbReference>
<dbReference type="PANTHER" id="PTHR14025">
    <property type="entry name" value="FANCONI ANEMIA GROUP M FANCM FAMILY MEMBER"/>
    <property type="match status" value="1"/>
</dbReference>
<dbReference type="PANTHER" id="PTHR14025:SF20">
    <property type="entry name" value="FANCONI ANEMIA GROUP M PROTEIN"/>
    <property type="match status" value="1"/>
</dbReference>
<dbReference type="Pfam" id="PF00271">
    <property type="entry name" value="Helicase_C"/>
    <property type="match status" value="1"/>
</dbReference>
<dbReference type="Pfam" id="PF04851">
    <property type="entry name" value="ResIII"/>
    <property type="match status" value="1"/>
</dbReference>
<dbReference type="SMART" id="SM00487">
    <property type="entry name" value="DEXDc"/>
    <property type="match status" value="1"/>
</dbReference>
<dbReference type="SMART" id="SM00490">
    <property type="entry name" value="HELICc"/>
    <property type="match status" value="1"/>
</dbReference>
<dbReference type="SUPFAM" id="SSF52540">
    <property type="entry name" value="P-loop containing nucleoside triphosphate hydrolases"/>
    <property type="match status" value="1"/>
</dbReference>
<dbReference type="PROSITE" id="PS51192">
    <property type="entry name" value="HELICASE_ATP_BIND_1"/>
    <property type="match status" value="1"/>
</dbReference>
<dbReference type="PROSITE" id="PS51194">
    <property type="entry name" value="HELICASE_CTER"/>
    <property type="match status" value="1"/>
</dbReference>
<evidence type="ECO:0000250" key="1">
    <source>
        <dbReference type="UniProtKB" id="Q9UT23"/>
    </source>
</evidence>
<evidence type="ECO:0000255" key="2">
    <source>
        <dbReference type="PROSITE-ProRule" id="PRU00541"/>
    </source>
</evidence>
<evidence type="ECO:0000255" key="3">
    <source>
        <dbReference type="PROSITE-ProRule" id="PRU00542"/>
    </source>
</evidence>
<evidence type="ECO:0000256" key="4">
    <source>
        <dbReference type="SAM" id="MobiDB-lite"/>
    </source>
</evidence>
<evidence type="ECO:0000269" key="5">
    <source>
    </source>
</evidence>
<evidence type="ECO:0000269" key="6">
    <source>
    </source>
</evidence>
<evidence type="ECO:0000269" key="7">
    <source>
    </source>
</evidence>
<evidence type="ECO:0000269" key="8">
    <source>
    </source>
</evidence>
<evidence type="ECO:0000269" key="9">
    <source>
    </source>
</evidence>
<evidence type="ECO:0000269" key="10">
    <source>
    </source>
</evidence>
<evidence type="ECO:0000269" key="11">
    <source>
    </source>
</evidence>
<evidence type="ECO:0000269" key="12">
    <source>
    </source>
</evidence>
<evidence type="ECO:0000269" key="13">
    <source>
    </source>
</evidence>
<evidence type="ECO:0000269" key="14">
    <source>
    </source>
</evidence>
<evidence type="ECO:0000303" key="15">
    <source>
    </source>
</evidence>
<evidence type="ECO:0000303" key="16">
    <source>
    </source>
</evidence>
<evidence type="ECO:0000305" key="17"/>
<evidence type="ECO:0000305" key="18">
    <source>
    </source>
</evidence>
<evidence type="ECO:0000312" key="19">
    <source>
        <dbReference type="SGD" id="S000001441"/>
    </source>
</evidence>
<sequence length="993" mass="114058">MASADDYFSDFEDDELDKLYEKAINKSVKETITRRAVPVQKDLHDNVLPGQKTVYEEIQRDVSFGPTHHELDYDALSFYVYPTNYEVRDYQYTIVHKSLFQNTLCAIPTGMGKTFIASTVMLNYFRWTKKAKIIFTAPTRPLVAQQIKACLGITGIPSDQTAILLDKSRKNREEIWANKRVFFATPQVVENDLKRGVLDPKDIVCLVIDEAHRATGSSAYTNVVKFIDRFNSSYRLLALTATPASDLEGVQEVVNNLDISKIEIRTEESMDIVKYMKKRKKEKIEVPLLLEIEDIIEQLGMAVKPVLQQAIELGIYEECDPSQINAFKAMQQSQKIIANPTIPEGIKWRNFFILQLLNNVGQMLKRLKIYGIRTFFNYFQNKCTEFTTKYNLKKSTNKIAAEFYYHPILKNIKNQCENYLSDPKFVGHGKLQCVRDELMDFFQKRGSDSRVIIFTELRESALEIVKFIDSVADDQIRPHIFIGQARAKEGFDEVKYTRKHAPKGRKKVERLHRQEQEKFLEAERTKRAANDKLERSARRTGSSEEAQISGMNQKMQKEVIHNFKKGEYNVLVCTSIGEEGLDIGEVDLIICYDTTSSPIKNIQRMGRTGRKRDGKIVLLFSSNESYKFERAMEDYSTLQALISKQCIDYKKSDRIIPEDIIPECHETLITINDENEIINEMEDVDEVIRYATQCMMGKKVKPKKAITKKKRVQENKKPKKFFMPDNVETSIVSASTLINKFLVNESGGKQLVTSNENPSKKRKIFKALDNLENDSTEEASSSLETEDEEVSDDNNVFIAEGQNGCQKDLETAIIRTGESLTTLKPLHNFERPNMALFVNDCGLPTKIEKNVKDIRGNQHNLEKEKSCTVDKNNMVLSLDDWNFFRNRYIPEGVSFDVEPNFVQYTKGVKVPHCHKVSKIITLFNDESNDNKKRTIDMNYTKCLARGMLRDEKKFVKVNDKSQVDNNSVNHDSSQSFTLSNAELDDILGSDSDF</sequence>
<protein>
    <recommendedName>
        <fullName evidence="17">ATP-dependent DNA helicase MPH1</fullName>
        <ecNumber evidence="8">3.6.4.12</ecNumber>
    </recommendedName>
    <alternativeName>
        <fullName evidence="1">FANCM-like protein 1</fullName>
    </alternativeName>
    <alternativeName>
        <fullName evidence="15">Mutator phenotype protein 1</fullName>
    </alternativeName>
</protein>
<gene>
    <name evidence="15" type="primary">MPH1</name>
    <name evidence="19" type="ordered locus">YIR002C</name>
    <name type="ORF">YIB2C</name>
</gene>
<reference key="1">
    <citation type="journal article" date="1995" name="Yeast">
        <title>Nucleotide sequence and analysis of the centromeric region of yeast chromosome IX.</title>
        <authorList>
            <person name="Voss H."/>
            <person name="Tamames J."/>
            <person name="Teodoru C."/>
            <person name="Valencia A."/>
            <person name="Sensen C."/>
            <person name="Wiemann S."/>
            <person name="Schwager C."/>
            <person name="Zimmermann J."/>
            <person name="Sander C."/>
            <person name="Ansorge W."/>
        </authorList>
    </citation>
    <scope>NUCLEOTIDE SEQUENCE [GENOMIC DNA]</scope>
    <source>
        <strain>ATCC 204508 / S288c</strain>
    </source>
</reference>
<reference key="2">
    <citation type="journal article" date="1997" name="Nature">
        <title>The nucleotide sequence of Saccharomyces cerevisiae chromosome IX.</title>
        <authorList>
            <person name="Churcher C.M."/>
            <person name="Bowman S."/>
            <person name="Badcock K."/>
            <person name="Bankier A.T."/>
            <person name="Brown D."/>
            <person name="Chillingworth T."/>
            <person name="Connor R."/>
            <person name="Devlin K."/>
            <person name="Gentles S."/>
            <person name="Hamlin N."/>
            <person name="Harris D.E."/>
            <person name="Horsnell T."/>
            <person name="Hunt S."/>
            <person name="Jagels K."/>
            <person name="Jones M."/>
            <person name="Lye G."/>
            <person name="Moule S."/>
            <person name="Odell C."/>
            <person name="Pearson D."/>
            <person name="Rajandream M.A."/>
            <person name="Rice P."/>
            <person name="Rowley N."/>
            <person name="Skelton J."/>
            <person name="Smith V."/>
            <person name="Walsh S.V."/>
            <person name="Whitehead S."/>
            <person name="Barrell B.G."/>
        </authorList>
    </citation>
    <scope>NUCLEOTIDE SEQUENCE [LARGE SCALE GENOMIC DNA]</scope>
    <source>
        <strain>ATCC 204508 / S288c</strain>
    </source>
</reference>
<reference key="3">
    <citation type="journal article" date="2014" name="G3 (Bethesda)">
        <title>The reference genome sequence of Saccharomyces cerevisiae: Then and now.</title>
        <authorList>
            <person name="Engel S.R."/>
            <person name="Dietrich F.S."/>
            <person name="Fisk D.G."/>
            <person name="Binkley G."/>
            <person name="Balakrishnan R."/>
            <person name="Costanzo M.C."/>
            <person name="Dwight S.S."/>
            <person name="Hitz B.C."/>
            <person name="Karra K."/>
            <person name="Nash R.S."/>
            <person name="Weng S."/>
            <person name="Wong E.D."/>
            <person name="Lloyd P."/>
            <person name="Skrzypek M.S."/>
            <person name="Miyasato S.R."/>
            <person name="Simison M."/>
            <person name="Cherry J.M."/>
        </authorList>
    </citation>
    <scope>GENOME REANNOTATION</scope>
    <source>
        <strain>ATCC 204508 / S288c</strain>
    </source>
</reference>
<reference key="4">
    <citation type="journal article" date="1999" name="Mol. Gen. Genet.">
        <title>Functional analysis of 150 deletion mutants in Saccharomyces cerevisiae by a systematic approach.</title>
        <authorList>
            <person name="Entian K.-D."/>
            <person name="Schuster T."/>
            <person name="Hegemann J.H."/>
            <person name="Becher D."/>
            <person name="Feldmann H."/>
            <person name="Gueldener U."/>
            <person name="Goetz R."/>
            <person name="Hansen M."/>
            <person name="Hollenberg C.P."/>
            <person name="Jansen G."/>
            <person name="Kramer W."/>
            <person name="Klein S."/>
            <person name="Koetter P."/>
            <person name="Kricke J."/>
            <person name="Launhardt H."/>
            <person name="Mannhaupt G."/>
            <person name="Maierl A."/>
            <person name="Meyer P."/>
            <person name="Mewes W."/>
            <person name="Munder T."/>
            <person name="Niedenthal R.K."/>
            <person name="Ramezani Rad M."/>
            <person name="Roehmer A."/>
            <person name="Roemer A."/>
            <person name="Rose M."/>
            <person name="Schaefer B."/>
            <person name="Siegler M.-L."/>
            <person name="Vetter J."/>
            <person name="Wilhelm N."/>
            <person name="Wolf K."/>
            <person name="Zimmermann F.K."/>
            <person name="Zollner A."/>
            <person name="Hinnen A."/>
        </authorList>
    </citation>
    <scope>GENE NAME</scope>
</reference>
<reference key="5">
    <citation type="journal article" date="2000" name="Genetics">
        <title>MPH1, a yeast gene encoding a DEAH protein, plays a role in protection of the genome from spontaneous and chemically induced damage.</title>
        <authorList>
            <person name="Scheller J."/>
            <person name="Schuerer K.A."/>
            <person name="Rudolph C."/>
            <person name="Hettwer S."/>
            <person name="Kramer W."/>
        </authorList>
    </citation>
    <scope>FUNCTION</scope>
    <scope>SUBCELLULAR LOCATION</scope>
</reference>
<reference key="6">
    <citation type="journal article" date="2003" name="Nature">
        <title>Global analysis of protein localization in budding yeast.</title>
        <authorList>
            <person name="Huh W.-K."/>
            <person name="Falvo J.V."/>
            <person name="Gerke L.C."/>
            <person name="Carroll A.S."/>
            <person name="Howson R.W."/>
            <person name="Weissman J.S."/>
            <person name="O'Shea E.K."/>
        </authorList>
    </citation>
    <scope>SUBCELLULAR LOCATION [LARGE SCALE ANALYSIS]</scope>
</reference>
<reference key="7">
    <citation type="journal article" date="2004" name="Genetics">
        <title>Yeast MPH1 gene functions in an error-free DNA damage bypass pathway that requires genes from homologous recombination, but not from postreplicative repair.</title>
        <authorList>
            <person name="Schuerer K.A."/>
            <person name="Rudolph C."/>
            <person name="Ulrich H.D."/>
            <person name="Kramer W."/>
        </authorList>
    </citation>
    <scope>FUNCTION</scope>
</reference>
<reference key="8">
    <citation type="journal article" date="2005" name="J. Biol. Chem.">
        <title>Saccharomyces cerevisiae MPH1 gene, required for homologous recombination-mediated mutation avoidance, encodes a 3' to 5' DNA helicase.</title>
        <authorList>
            <person name="Prakash R."/>
            <person name="Krejci L."/>
            <person name="Van Komen S."/>
            <person name="Schuerer K.A."/>
            <person name="Kramer W."/>
            <person name="Sung P."/>
        </authorList>
    </citation>
    <scope>FUNCTION</scope>
    <scope>CATALYTIC ACTIVITY</scope>
</reference>
<reference key="9">
    <citation type="journal article" date="2005" name="PLoS Genet.">
        <title>Genome-wide requirements for resistance to functionally distinct DNA-damaging agents.</title>
        <authorList>
            <person name="Lee W."/>
            <person name="St Onge R.P."/>
            <person name="Proctor M."/>
            <person name="Flaherty P."/>
            <person name="Jordan M.I."/>
            <person name="Arkin A.P."/>
            <person name="Davis R.W."/>
            <person name="Nislow C."/>
            <person name="Giaever G."/>
        </authorList>
    </citation>
    <scope>FUNCTION</scope>
</reference>
<reference key="10">
    <citation type="journal article" date="2008" name="Mol. Cell. Proteomics">
        <title>A multidimensional chromatography technology for in-depth phosphoproteome analysis.</title>
        <authorList>
            <person name="Albuquerque C.P."/>
            <person name="Smolka M.B."/>
            <person name="Payne S.H."/>
            <person name="Bafna V."/>
            <person name="Eng J."/>
            <person name="Zhou H."/>
        </authorList>
    </citation>
    <scope>IDENTIFICATION BY MASS SPECTROMETRY [LARGE SCALE ANALYSIS]</scope>
</reference>
<reference key="11">
    <citation type="journal article" date="2009" name="Genes Dev.">
        <title>Yeast Mph1 helicase dissociates Rad51-made D-loops: implications for crossover control in mitotic recombination.</title>
        <authorList>
            <person name="Prakash R."/>
            <person name="Satory D."/>
            <person name="Dray E."/>
            <person name="Papusha A."/>
            <person name="Scheller J."/>
            <person name="Kramer W."/>
            <person name="Krejci L."/>
            <person name="Klein H."/>
            <person name="Haber J.E."/>
            <person name="Sung P."/>
            <person name="Ira G."/>
        </authorList>
    </citation>
    <scope>FUNCTION</scope>
    <scope>SUBCELLULAR LOCATION</scope>
</reference>
<reference key="12">
    <citation type="journal article" date="2009" name="J. Biol. Chem.">
        <title>The MPH1 gene of Saccharomyces cerevisiae functions in Okazaki fragment processing.</title>
        <authorList>
            <person name="Kang Y.H."/>
            <person name="Kang M.J."/>
            <person name="Kim J.H."/>
            <person name="Lee C.H."/>
            <person name="Cho I.T."/>
            <person name="Hurwitz J."/>
            <person name="Seo Y.S."/>
        </authorList>
    </citation>
    <scope>FUNCTION</scope>
</reference>
<reference key="13">
    <citation type="journal article" date="2010" name="Mol. Cell">
        <title>A histone-fold complex and FANCM form a conserved DNA-remodeling complex to maintain genome stability.</title>
        <authorList>
            <person name="Yan Z."/>
            <person name="Delannoy M."/>
            <person name="Ling C."/>
            <person name="Daee D."/>
            <person name="Osman F."/>
            <person name="Muniandy P.A."/>
            <person name="Shen X."/>
            <person name="Oostra A.B."/>
            <person name="Du H."/>
            <person name="Steltenpool J."/>
            <person name="Lin T."/>
            <person name="Schuster B."/>
            <person name="Decaillet C."/>
            <person name="Stasiak A."/>
            <person name="Stasiak A.Z."/>
            <person name="Stone S."/>
            <person name="Hoatlin M.E."/>
            <person name="Schindler D."/>
            <person name="Woodcock C.L."/>
            <person name="Joenje H."/>
            <person name="Sen R."/>
            <person name="de Winter J.P."/>
            <person name="Li L."/>
            <person name="Seidman M.M."/>
            <person name="Whitby M.C."/>
            <person name="Myung K."/>
            <person name="Constantinousend A."/>
            <person name="Wang W."/>
        </authorList>
    </citation>
    <scope>FUNCTION</scope>
</reference>
<reference key="14">
    <citation type="journal article" date="2012" name="PLoS Genet.">
        <title>Components of a Fanconi-like pathway control Pso2-independent DNA interstrand crosslink repair in yeast.</title>
        <authorList>
            <person name="Ward T.A."/>
            <person name="Dudasova Z."/>
            <person name="Sarkar S."/>
            <person name="Bhide M.R."/>
            <person name="Vlasakova D."/>
            <person name="Chovanec M."/>
            <person name="McHugh P.J."/>
        </authorList>
    </citation>
    <scope>FUNCTION</scope>
</reference>
<reference key="15">
    <citation type="journal article" date="2013" name="Mol. Cell">
        <title>Mph1 and Mus81-Mms4 prevent aberrant processing of mitotic recombination intermediates.</title>
        <authorList>
            <person name="Mazon G."/>
            <person name="Symington L.S."/>
        </authorList>
    </citation>
    <scope>FUNCTION</scope>
    <scope>DISRUPTION PHENOTYPE</scope>
</reference>
<reference key="16">
    <citation type="journal article" date="2016" name="PLoS Genet.">
        <title>Binding of the Fkh1 forkhead associated domain to a phosphopeptide within the Mph1 DNA helicase regulates mating-type switching in budding yeast.</title>
        <authorList>
            <person name="Dummer A.M."/>
            <person name="Su Z."/>
            <person name="Cherney R."/>
            <person name="Choi K."/>
            <person name="Denu J."/>
            <person name="Zhao X."/>
            <person name="Fox C.A."/>
        </authorList>
    </citation>
    <scope>FUNCTION</scope>
    <scope>INTERACTION WITH FKH1</scope>
    <scope>DOMAIN</scope>
    <scope>DISRUPTION PHENOTYPE</scope>
    <scope>MUTAGENESIS OF ASP-774; SER-775; THR-776; GLU-777; SER-782; GLU-784; THR-785 AND GLU-786</scope>
    <scope>PHOSPHORYLATION AT THR-776 AND THR-785</scope>
</reference>
<keyword id="KW-0067">ATP-binding</keyword>
<keyword id="KW-0227">DNA damage</keyword>
<keyword id="KW-0234">DNA repair</keyword>
<keyword id="KW-0238">DNA-binding</keyword>
<keyword id="KW-0347">Helicase</keyword>
<keyword id="KW-0378">Hydrolase</keyword>
<keyword id="KW-0547">Nucleotide-binding</keyword>
<keyword id="KW-0539">Nucleus</keyword>
<keyword id="KW-0597">Phosphoprotein</keyword>
<keyword id="KW-1185">Reference proteome</keyword>
<name>MPH1_YEAST</name>
<organism>
    <name type="scientific">Saccharomyces cerevisiae (strain ATCC 204508 / S288c)</name>
    <name type="common">Baker's yeast</name>
    <dbReference type="NCBI Taxonomy" id="559292"/>
    <lineage>
        <taxon>Eukaryota</taxon>
        <taxon>Fungi</taxon>
        <taxon>Dikarya</taxon>
        <taxon>Ascomycota</taxon>
        <taxon>Saccharomycotina</taxon>
        <taxon>Saccharomycetes</taxon>
        <taxon>Saccharomycetales</taxon>
        <taxon>Saccharomycetaceae</taxon>
        <taxon>Saccharomyces</taxon>
    </lineage>
</organism>
<feature type="chain" id="PRO_0000055193" description="ATP-dependent DNA helicase MPH1">
    <location>
        <begin position="1"/>
        <end position="993"/>
    </location>
</feature>
<feature type="domain" description="Helicase ATP-binding" evidence="2">
    <location>
        <begin position="94"/>
        <end position="261"/>
    </location>
</feature>
<feature type="domain" description="Helicase C-terminal" evidence="3">
    <location>
        <begin position="507"/>
        <end position="655"/>
    </location>
</feature>
<feature type="region of interest" description="Disordered" evidence="4">
    <location>
        <begin position="530"/>
        <end position="551"/>
    </location>
</feature>
<feature type="region of interest" description="FKH1-binding region" evidence="14">
    <location>
        <begin position="751"/>
        <end position="810"/>
    </location>
</feature>
<feature type="short sequence motif" description="DEAH box" evidence="2">
    <location>
        <begin position="209"/>
        <end position="212"/>
    </location>
</feature>
<feature type="compositionally biased region" description="Polar residues" evidence="4">
    <location>
        <begin position="539"/>
        <end position="551"/>
    </location>
</feature>
<feature type="binding site" evidence="2">
    <location>
        <begin position="107"/>
        <end position="114"/>
    </location>
    <ligand>
        <name>ATP</name>
        <dbReference type="ChEBI" id="CHEBI:30616"/>
    </ligand>
</feature>
<feature type="modified residue" description="Phosphothreonine" evidence="14">
    <location>
        <position position="776"/>
    </location>
</feature>
<feature type="modified residue" description="Phosphothreonine" evidence="14">
    <location>
        <position position="785"/>
    </location>
</feature>
<feature type="mutagenesis site" description="Reduces the interaction with FKH1; when associated with A-785." evidence="14">
    <original>D</original>
    <variation>A</variation>
    <location>
        <position position="774"/>
    </location>
</feature>
<feature type="mutagenesis site" description="Reduces the interaction with FKH1; when associated with A-785." evidence="14">
    <original>S</original>
    <variation>A</variation>
    <location>
        <position position="775"/>
    </location>
</feature>
<feature type="mutagenesis site" description="Abolishes the interaction with FKH1; when associated with A-785." evidence="14">
    <original>T</original>
    <variation>A</variation>
    <location>
        <position position="776"/>
    </location>
</feature>
<feature type="mutagenesis site" description="Reduces the interaction with FKH1; when associated with A-785." evidence="14">
    <original>E</original>
    <variation>A</variation>
    <location>
        <position position="777"/>
    </location>
</feature>
<feature type="mutagenesis site" description="Reduces the interaction with FKH1; when associated with A-776." evidence="14">
    <original>S</original>
    <variation>A</variation>
    <location>
        <position position="782"/>
    </location>
</feature>
<feature type="mutagenesis site" description="Reduces the interaction with FKH1; when associated with A-776." evidence="14">
    <original>E</original>
    <variation>A</variation>
    <location>
        <position position="784"/>
    </location>
</feature>
<feature type="mutagenesis site" description="Abolishes the interaction with FKH1; when associated with A-776." evidence="14">
    <original>T</original>
    <variation>A</variation>
    <location>
        <position position="785"/>
    </location>
</feature>
<feature type="mutagenesis site" description="Reduces the interaction with FKH1; when associated with A-776." evidence="14">
    <original>E</original>
    <variation>A</variation>
    <location>
        <position position="786"/>
    </location>
</feature>
<proteinExistence type="evidence at protein level"/>
<comment type="function">
    <text evidence="5 7 8 9 10 11 12 13 14 18">ATP-dependent DNA helicase involved in DNA damage repair by homologous recombination and in genome maintenance (PubMed:10880470, PubMed:15126389, PubMed:15634678, PubMed:16121259). Capable of unwinding D-loops (PubMed:19136626). Plays a role in limiting crossover recombinants during mitotic DNA double-strand break (DSB) repair (PubMed:19136626). Prevents crossovers between ectopic sequences by removing substrates for MUS81-MMS4 or RAD1-RAD10 cleavage (PubMed:24119400). Component of a FANCM-MHF complex which promotes gene conversion at blocked replication forks, probably by reversal of the stalled fork (Probable) (PubMed:22912599). Binds to flap-structured DNA but not to non-flap nicked DNA, and participates in Okazaki fragment processing by stimulating the endonuclease activities of FEN1 and DNA2 (PubMed:19181670). Involved in recombination donor preference during mating-type switching via interaction with FKH1 (PubMed:27257873).</text>
</comment>
<comment type="catalytic activity">
    <reaction evidence="8">
        <text>ATP + H2O = ADP + phosphate + H(+)</text>
        <dbReference type="Rhea" id="RHEA:13065"/>
        <dbReference type="ChEBI" id="CHEBI:15377"/>
        <dbReference type="ChEBI" id="CHEBI:15378"/>
        <dbReference type="ChEBI" id="CHEBI:30616"/>
        <dbReference type="ChEBI" id="CHEBI:43474"/>
        <dbReference type="ChEBI" id="CHEBI:456216"/>
        <dbReference type="EC" id="3.6.4.12"/>
    </reaction>
</comment>
<comment type="subunit">
    <text evidence="1 14">Interacts with the MHF histone-fold complex composed of MHF1 and MHF2 to form the FANCM-MHF complex (By similarity). Interacts with FHK1 (PubMed:27257873).</text>
</comment>
<comment type="interaction">
    <interactant intactId="EBI-25369">
        <id>P40562</id>
    </interactant>
    <interactant intactId="EBI-34125">
        <id>Q08204</id>
        <label>SMC5</label>
    </interactant>
    <organismsDiffer>false</organismsDiffer>
    <experiments>5</experiments>
</comment>
<comment type="subcellular location">
    <subcellularLocation>
        <location evidence="5 6">Nucleus</location>
    </subcellularLocation>
</comment>
<comment type="PTM">
    <text evidence="14">Phosphorylation at both Thr-776 and Thr-785 is required for the interaction with FKH1.</text>
</comment>
<comment type="disruption phenotype">
    <text evidence="13 14 16">Causes transiant accumulation of ectopic joint molecules (JMs) (PubMed:24119400). Leads to a defect in donor preference during mating-type switching (PubMed:27257873). Does not affect FKH1's overlapping role with FKH2 of regulation of the expression of the CLB2 cluster of genes during the G2/M phase of the mitotic cell cycle (PubMed:27257873).</text>
</comment>
<comment type="similarity">
    <text evidence="17">Belongs to the DEAD box helicase family. DEAH subfamily. FANCM sub-subfamily.</text>
</comment>